<comment type="function">
    <text evidence="3 4 5">Binds CLEC2I/Clr-g leading to activation of natural killer cells or costimulation of IL-2 production and proliferation of T-cells in response to antigen stimulation. May contribute to the formation of the immunological synapse between T-cells and antigen-presenting dendritic cells.</text>
</comment>
<comment type="subcellular location">
    <subcellularLocation>
        <location evidence="6">Membrane</location>
        <topology evidence="6">Single-pass type II membrane protein</topology>
    </subcellularLocation>
</comment>
<comment type="tissue specificity">
    <text evidence="4">Highly expressed in dendritic cells. Detectable in natural killer cells.</text>
</comment>
<accession>Q8VD98</accession>
<accession>Q1AFZ8</accession>
<accession>Q3TDT3</accession>
<accession>Q8C9Q1</accession>
<proteinExistence type="evidence at transcript level"/>
<sequence length="217" mass="24681">MDTSKVHGNVKPFRCPGYKQASSPSFSPDACRCPHWHHLALKSGCAGLILLLLSLIGLSVLVRFLVQKPPIEKCSVAAQENRTELTGRSAILECPRYWHPHWNKCLFVSQISRPWAEGRDACSMEDAILLLIENKEELRFVQNLIKGKEQLFFIGLKYVQKEKIWKWIDGSILNPNLLRITGKDKENSCAIISHTEVFSDSCSSDNHWICQKTLIHV</sequence>
<name>KLRBF_MOUSE</name>
<keyword id="KW-1015">Disulfide bond</keyword>
<keyword id="KW-0325">Glycoprotein</keyword>
<keyword id="KW-0430">Lectin</keyword>
<keyword id="KW-0472">Membrane</keyword>
<keyword id="KW-1185">Reference proteome</keyword>
<keyword id="KW-0735">Signal-anchor</keyword>
<keyword id="KW-0812">Transmembrane</keyword>
<keyword id="KW-1133">Transmembrane helix</keyword>
<protein>
    <recommendedName>
        <fullName>Killer cell lectin-like receptor subfamily B member 1F</fullName>
    </recommendedName>
    <alternativeName>
        <fullName>CD161 antigen-like family member F</fullName>
    </alternativeName>
    <alternativeName>
        <fullName>Natural killer cell surface protein NKR-P1F</fullName>
    </alternativeName>
    <cdAntigenName>CD161f</cdAntigenName>
</protein>
<gene>
    <name type="primary">Klrb1f</name>
    <name type="synonym">Nkrp1f</name>
</gene>
<evidence type="ECO:0000255" key="1"/>
<evidence type="ECO:0000255" key="2">
    <source>
        <dbReference type="PROSITE-ProRule" id="PRU00040"/>
    </source>
</evidence>
<evidence type="ECO:0000269" key="3">
    <source>
    </source>
</evidence>
<evidence type="ECO:0000269" key="4">
    <source>
    </source>
</evidence>
<evidence type="ECO:0000269" key="5">
    <source>
    </source>
</evidence>
<evidence type="ECO:0000305" key="6"/>
<dbReference type="EMBL" id="AF320600">
    <property type="protein sequence ID" value="AAL37201.1"/>
    <property type="molecule type" value="Genomic_DNA"/>
</dbReference>
<dbReference type="EMBL" id="AY029597">
    <property type="protein sequence ID" value="AAK38158.1"/>
    <property type="molecule type" value="mRNA"/>
</dbReference>
<dbReference type="EMBL" id="DQ143105">
    <property type="protein sequence ID" value="ABA43356.1"/>
    <property type="molecule type" value="Genomic_DNA"/>
</dbReference>
<dbReference type="EMBL" id="DQ237931">
    <property type="protein sequence ID" value="ABB72029.1"/>
    <property type="molecule type" value="mRNA"/>
</dbReference>
<dbReference type="EMBL" id="AK041601">
    <property type="protein sequence ID" value="BAC31001.1"/>
    <property type="molecule type" value="mRNA"/>
</dbReference>
<dbReference type="EMBL" id="AK154278">
    <property type="protein sequence ID" value="BAE32484.1"/>
    <property type="molecule type" value="mRNA"/>
</dbReference>
<dbReference type="EMBL" id="AK170023">
    <property type="protein sequence ID" value="BAE41516.1"/>
    <property type="molecule type" value="mRNA"/>
</dbReference>
<dbReference type="EMBL" id="BC127142">
    <property type="protein sequence ID" value="AAI27143.1"/>
    <property type="molecule type" value="mRNA"/>
</dbReference>
<dbReference type="CCDS" id="CCDS20579.1"/>
<dbReference type="RefSeq" id="NP_694734.1">
    <property type="nucleotide sequence ID" value="NM_153094.2"/>
</dbReference>
<dbReference type="SMR" id="Q8VD98"/>
<dbReference type="FunCoup" id="Q8VD98">
    <property type="interactions" value="154"/>
</dbReference>
<dbReference type="STRING" id="10090.ENSMUSP00000032257"/>
<dbReference type="GlyCosmos" id="Q8VD98">
    <property type="glycosylation" value="1 site, No reported glycans"/>
</dbReference>
<dbReference type="GlyGen" id="Q8VD98">
    <property type="glycosylation" value="1 site"/>
</dbReference>
<dbReference type="PaxDb" id="10090-ENSMUSP00000032257"/>
<dbReference type="DNASU" id="232408"/>
<dbReference type="Ensembl" id="ENSMUST00000032257.10">
    <property type="protein sequence ID" value="ENSMUSP00000032257.8"/>
    <property type="gene ID" value="ENSMUSG00000030154.11"/>
</dbReference>
<dbReference type="GeneID" id="232408"/>
<dbReference type="KEGG" id="mmu:232408"/>
<dbReference type="UCSC" id="uc009efa.2">
    <property type="organism name" value="mouse"/>
</dbReference>
<dbReference type="AGR" id="MGI:2442965"/>
<dbReference type="CTD" id="232408"/>
<dbReference type="MGI" id="MGI:2442965">
    <property type="gene designation" value="Klrb1f"/>
</dbReference>
<dbReference type="VEuPathDB" id="HostDB:ENSMUSG00000030154"/>
<dbReference type="eggNOG" id="KOG4297">
    <property type="taxonomic scope" value="Eukaryota"/>
</dbReference>
<dbReference type="GeneTree" id="ENSGT00940000154685"/>
<dbReference type="HOGENOM" id="CLU_049894_8_2_1"/>
<dbReference type="InParanoid" id="Q8VD98"/>
<dbReference type="OMA" id="CSMKEAT"/>
<dbReference type="OrthoDB" id="538816at2759"/>
<dbReference type="PhylomeDB" id="Q8VD98"/>
<dbReference type="TreeFam" id="TF337735"/>
<dbReference type="BioGRID-ORCS" id="232408">
    <property type="hits" value="2 hits in 76 CRISPR screens"/>
</dbReference>
<dbReference type="ChiTaRS" id="Klrb1f">
    <property type="organism name" value="mouse"/>
</dbReference>
<dbReference type="PRO" id="PR:Q8VD98"/>
<dbReference type="Proteomes" id="UP000000589">
    <property type="component" value="Chromosome 6"/>
</dbReference>
<dbReference type="RNAct" id="Q8VD98">
    <property type="molecule type" value="protein"/>
</dbReference>
<dbReference type="Bgee" id="ENSMUSG00000030154">
    <property type="expression patterns" value="Expressed in granulocyte and 32 other cell types or tissues"/>
</dbReference>
<dbReference type="ExpressionAtlas" id="Q8VD98">
    <property type="expression patterns" value="baseline and differential"/>
</dbReference>
<dbReference type="GO" id="GO:0009986">
    <property type="term" value="C:cell surface"/>
    <property type="evidence" value="ECO:0000314"/>
    <property type="project" value="MGI"/>
</dbReference>
<dbReference type="GO" id="GO:0005886">
    <property type="term" value="C:plasma membrane"/>
    <property type="evidence" value="ECO:0000314"/>
    <property type="project" value="MGI"/>
</dbReference>
<dbReference type="GO" id="GO:0030246">
    <property type="term" value="F:carbohydrate binding"/>
    <property type="evidence" value="ECO:0007669"/>
    <property type="project" value="UniProtKB-KW"/>
</dbReference>
<dbReference type="GO" id="GO:0038023">
    <property type="term" value="F:signaling receptor activity"/>
    <property type="evidence" value="ECO:0000314"/>
    <property type="project" value="MGI"/>
</dbReference>
<dbReference type="CDD" id="cd03593">
    <property type="entry name" value="CLECT_NK_receptors_like"/>
    <property type="match status" value="1"/>
</dbReference>
<dbReference type="Gene3D" id="3.10.100.10">
    <property type="entry name" value="Mannose-Binding Protein A, subunit A"/>
    <property type="match status" value="1"/>
</dbReference>
<dbReference type="InterPro" id="IPR001304">
    <property type="entry name" value="C-type_lectin-like"/>
</dbReference>
<dbReference type="InterPro" id="IPR016186">
    <property type="entry name" value="C-type_lectin-like/link_sf"/>
</dbReference>
<dbReference type="InterPro" id="IPR016187">
    <property type="entry name" value="CTDL_fold"/>
</dbReference>
<dbReference type="InterPro" id="IPR051527">
    <property type="entry name" value="KLR_subfamily_B"/>
</dbReference>
<dbReference type="InterPro" id="IPR033992">
    <property type="entry name" value="NKR-like_CTLD"/>
</dbReference>
<dbReference type="PANTHER" id="PTHR46784">
    <property type="entry name" value="KILLER CELL LECTIN-LIKE RECEPTOR SUBFAMILY B MEMBER 1"/>
    <property type="match status" value="1"/>
</dbReference>
<dbReference type="PANTHER" id="PTHR46784:SF3">
    <property type="entry name" value="KILLER CELL LECTIN-LIKE RECEPTOR SUBFAMILY B MEMBER 1F"/>
    <property type="match status" value="1"/>
</dbReference>
<dbReference type="Pfam" id="PF00059">
    <property type="entry name" value="Lectin_C"/>
    <property type="match status" value="1"/>
</dbReference>
<dbReference type="SMART" id="SM00034">
    <property type="entry name" value="CLECT"/>
    <property type="match status" value="1"/>
</dbReference>
<dbReference type="SUPFAM" id="SSF56436">
    <property type="entry name" value="C-type lectin-like"/>
    <property type="match status" value="1"/>
</dbReference>
<dbReference type="PROSITE" id="PS50041">
    <property type="entry name" value="C_TYPE_LECTIN_2"/>
    <property type="match status" value="1"/>
</dbReference>
<reference key="1">
    <citation type="journal article" date="2001" name="Immunogenetics">
        <title>Analysis of a 1-Mb BAC contig overlapping the mouse Nkrp1 cluster of genes: cloning of three new Nkrp1 members, Nkrp1d, Nkrp1e, and Nkrp1f.</title>
        <authorList>
            <person name="Plougastel B."/>
            <person name="Matsumoto K."/>
            <person name="Dubbelde C."/>
            <person name="Yokoyama W.M."/>
        </authorList>
    </citation>
    <scope>NUCLEOTIDE SEQUENCE [GENOMIC DNA / MRNA]</scope>
    <source>
        <strain>C57BL/6J</strain>
    </source>
</reference>
<reference key="2">
    <citation type="journal article" date="2006" name="J. Immunol.">
        <title>Molecular and genetic basis for strain-dependent NK1.1 alloreactivity of mouse NK cells.</title>
        <authorList>
            <person name="Carlyle J.R."/>
            <person name="Mesci A."/>
            <person name="Ljutic B."/>
            <person name="Belanger S."/>
            <person name="Tai L.-H."/>
            <person name="Rousselle E."/>
            <person name="Troke A.D."/>
            <person name="Proteau M.-F."/>
            <person name="Makrigiannis A.P."/>
        </authorList>
    </citation>
    <scope>NUCLEOTIDE SEQUENCE [MRNA]</scope>
    <source>
        <strain>BALB/cJ</strain>
        <tissue>Spleen</tissue>
    </source>
</reference>
<reference key="3">
    <citation type="journal article" date="2005" name="Science">
        <title>The transcriptional landscape of the mammalian genome.</title>
        <authorList>
            <person name="Carninci P."/>
            <person name="Kasukawa T."/>
            <person name="Katayama S."/>
            <person name="Gough J."/>
            <person name="Frith M.C."/>
            <person name="Maeda N."/>
            <person name="Oyama R."/>
            <person name="Ravasi T."/>
            <person name="Lenhard B."/>
            <person name="Wells C."/>
            <person name="Kodzius R."/>
            <person name="Shimokawa K."/>
            <person name="Bajic V.B."/>
            <person name="Brenner S.E."/>
            <person name="Batalov S."/>
            <person name="Forrest A.R."/>
            <person name="Zavolan M."/>
            <person name="Davis M.J."/>
            <person name="Wilming L.G."/>
            <person name="Aidinis V."/>
            <person name="Allen J.E."/>
            <person name="Ambesi-Impiombato A."/>
            <person name="Apweiler R."/>
            <person name="Aturaliya R.N."/>
            <person name="Bailey T.L."/>
            <person name="Bansal M."/>
            <person name="Baxter L."/>
            <person name="Beisel K.W."/>
            <person name="Bersano T."/>
            <person name="Bono H."/>
            <person name="Chalk A.M."/>
            <person name="Chiu K.P."/>
            <person name="Choudhary V."/>
            <person name="Christoffels A."/>
            <person name="Clutterbuck D.R."/>
            <person name="Crowe M.L."/>
            <person name="Dalla E."/>
            <person name="Dalrymple B.P."/>
            <person name="de Bono B."/>
            <person name="Della Gatta G."/>
            <person name="di Bernardo D."/>
            <person name="Down T."/>
            <person name="Engstrom P."/>
            <person name="Fagiolini M."/>
            <person name="Faulkner G."/>
            <person name="Fletcher C.F."/>
            <person name="Fukushima T."/>
            <person name="Furuno M."/>
            <person name="Futaki S."/>
            <person name="Gariboldi M."/>
            <person name="Georgii-Hemming P."/>
            <person name="Gingeras T.R."/>
            <person name="Gojobori T."/>
            <person name="Green R.E."/>
            <person name="Gustincich S."/>
            <person name="Harbers M."/>
            <person name="Hayashi Y."/>
            <person name="Hensch T.K."/>
            <person name="Hirokawa N."/>
            <person name="Hill D."/>
            <person name="Huminiecki L."/>
            <person name="Iacono M."/>
            <person name="Ikeo K."/>
            <person name="Iwama A."/>
            <person name="Ishikawa T."/>
            <person name="Jakt M."/>
            <person name="Kanapin A."/>
            <person name="Katoh M."/>
            <person name="Kawasawa Y."/>
            <person name="Kelso J."/>
            <person name="Kitamura H."/>
            <person name="Kitano H."/>
            <person name="Kollias G."/>
            <person name="Krishnan S.P."/>
            <person name="Kruger A."/>
            <person name="Kummerfeld S.K."/>
            <person name="Kurochkin I.V."/>
            <person name="Lareau L.F."/>
            <person name="Lazarevic D."/>
            <person name="Lipovich L."/>
            <person name="Liu J."/>
            <person name="Liuni S."/>
            <person name="McWilliam S."/>
            <person name="Madan Babu M."/>
            <person name="Madera M."/>
            <person name="Marchionni L."/>
            <person name="Matsuda H."/>
            <person name="Matsuzawa S."/>
            <person name="Miki H."/>
            <person name="Mignone F."/>
            <person name="Miyake S."/>
            <person name="Morris K."/>
            <person name="Mottagui-Tabar S."/>
            <person name="Mulder N."/>
            <person name="Nakano N."/>
            <person name="Nakauchi H."/>
            <person name="Ng P."/>
            <person name="Nilsson R."/>
            <person name="Nishiguchi S."/>
            <person name="Nishikawa S."/>
            <person name="Nori F."/>
            <person name="Ohara O."/>
            <person name="Okazaki Y."/>
            <person name="Orlando V."/>
            <person name="Pang K.C."/>
            <person name="Pavan W.J."/>
            <person name="Pavesi G."/>
            <person name="Pesole G."/>
            <person name="Petrovsky N."/>
            <person name="Piazza S."/>
            <person name="Reed J."/>
            <person name="Reid J.F."/>
            <person name="Ring B.Z."/>
            <person name="Ringwald M."/>
            <person name="Rost B."/>
            <person name="Ruan Y."/>
            <person name="Salzberg S.L."/>
            <person name="Sandelin A."/>
            <person name="Schneider C."/>
            <person name="Schoenbach C."/>
            <person name="Sekiguchi K."/>
            <person name="Semple C.A."/>
            <person name="Seno S."/>
            <person name="Sessa L."/>
            <person name="Sheng Y."/>
            <person name="Shibata Y."/>
            <person name="Shimada H."/>
            <person name="Shimada K."/>
            <person name="Silva D."/>
            <person name="Sinclair B."/>
            <person name="Sperling S."/>
            <person name="Stupka E."/>
            <person name="Sugiura K."/>
            <person name="Sultana R."/>
            <person name="Takenaka Y."/>
            <person name="Taki K."/>
            <person name="Tammoja K."/>
            <person name="Tan S.L."/>
            <person name="Tang S."/>
            <person name="Taylor M.S."/>
            <person name="Tegner J."/>
            <person name="Teichmann S.A."/>
            <person name="Ueda H.R."/>
            <person name="van Nimwegen E."/>
            <person name="Verardo R."/>
            <person name="Wei C.L."/>
            <person name="Yagi K."/>
            <person name="Yamanishi H."/>
            <person name="Zabarovsky E."/>
            <person name="Zhu S."/>
            <person name="Zimmer A."/>
            <person name="Hide W."/>
            <person name="Bult C."/>
            <person name="Grimmond S.M."/>
            <person name="Teasdale R.D."/>
            <person name="Liu E.T."/>
            <person name="Brusic V."/>
            <person name="Quackenbush J."/>
            <person name="Wahlestedt C."/>
            <person name="Mattick J.S."/>
            <person name="Hume D.A."/>
            <person name="Kai C."/>
            <person name="Sasaki D."/>
            <person name="Tomaru Y."/>
            <person name="Fukuda S."/>
            <person name="Kanamori-Katayama M."/>
            <person name="Suzuki M."/>
            <person name="Aoki J."/>
            <person name="Arakawa T."/>
            <person name="Iida J."/>
            <person name="Imamura K."/>
            <person name="Itoh M."/>
            <person name="Kato T."/>
            <person name="Kawaji H."/>
            <person name="Kawagashira N."/>
            <person name="Kawashima T."/>
            <person name="Kojima M."/>
            <person name="Kondo S."/>
            <person name="Konno H."/>
            <person name="Nakano K."/>
            <person name="Ninomiya N."/>
            <person name="Nishio T."/>
            <person name="Okada M."/>
            <person name="Plessy C."/>
            <person name="Shibata K."/>
            <person name="Shiraki T."/>
            <person name="Suzuki S."/>
            <person name="Tagami M."/>
            <person name="Waki K."/>
            <person name="Watahiki A."/>
            <person name="Okamura-Oho Y."/>
            <person name="Suzuki H."/>
            <person name="Kawai J."/>
            <person name="Hayashizaki Y."/>
        </authorList>
    </citation>
    <scope>NUCLEOTIDE SEQUENCE [LARGE SCALE MRNA]</scope>
    <source>
        <strain>C57BL/6J</strain>
        <strain>NOD</strain>
        <tissue>Thymus</tissue>
    </source>
</reference>
<reference key="4">
    <citation type="journal article" date="2004" name="Genome Res.">
        <title>The status, quality, and expansion of the NIH full-length cDNA project: the Mammalian Gene Collection (MGC).</title>
        <authorList>
            <consortium name="The MGC Project Team"/>
        </authorList>
    </citation>
    <scope>NUCLEOTIDE SEQUENCE [LARGE SCALE MRNA]</scope>
</reference>
<reference key="5">
    <citation type="journal article" date="2003" name="Nat. Immunol.">
        <title>Genetically linked C-type lectin-related ligands for the NKRP1 family of natural killer cell receptors.</title>
        <authorList>
            <person name="Iizuka K."/>
            <person name="Naidenko O.V."/>
            <person name="Plougastel B.F.M."/>
            <person name="Fremont D.H."/>
            <person name="Yokoyama W.M."/>
        </authorList>
    </citation>
    <scope>FUNCTION</scope>
</reference>
<reference key="6">
    <citation type="journal article" date="2005" name="Cell. Immunol.">
        <title>C-type lectin OCILRP2/Clr-g and its ligand NKRP1f costimulate T cell proliferation and IL-2 production.</title>
        <authorList>
            <person name="Tian W."/>
            <person name="Nunez R."/>
            <person name="Cheng S."/>
            <person name="Ding Y."/>
            <person name="Tumang J."/>
            <person name="Lyddane C."/>
            <person name="Roman C."/>
            <person name="Liou H.-C."/>
        </authorList>
    </citation>
    <scope>FUNCTION</scope>
    <scope>TISSUE SPECIFICITY</scope>
</reference>
<reference key="7">
    <citation type="journal article" date="2005" name="Cell. Immunol.">
        <title>Silencing OCILRP2 leads to intrinsic defects in T cells in response to antigenic stimulation.</title>
        <authorList>
            <person name="Tian W."/>
            <person name="Feng B."/>
            <person name="Liou H.-C."/>
        </authorList>
    </citation>
    <scope>FUNCTION</scope>
</reference>
<feature type="chain" id="PRO_0000271480" description="Killer cell lectin-like receptor subfamily B member 1F">
    <location>
        <begin position="1"/>
        <end position="217"/>
    </location>
</feature>
<feature type="topological domain" description="Cytoplasmic" evidence="1">
    <location>
        <begin position="1"/>
        <end position="45"/>
    </location>
</feature>
<feature type="transmembrane region" description="Helical; Signal-anchor for type II membrane protein" evidence="1">
    <location>
        <begin position="46"/>
        <end position="66"/>
    </location>
</feature>
<feature type="topological domain" description="Extracellular" evidence="1">
    <location>
        <begin position="67"/>
        <end position="217"/>
    </location>
</feature>
<feature type="domain" description="C-type lectin" evidence="2">
    <location>
        <begin position="101"/>
        <end position="211"/>
    </location>
</feature>
<feature type="short sequence motif" description="LCK-binding motif" evidence="1">
    <location>
        <begin position="31"/>
        <end position="34"/>
    </location>
</feature>
<feature type="glycosylation site" description="N-linked (GlcNAc...) asparagine" evidence="1">
    <location>
        <position position="81"/>
    </location>
</feature>
<feature type="disulfide bond" evidence="2">
    <location>
        <begin position="122"/>
        <end position="210"/>
    </location>
</feature>
<feature type="disulfide bond" evidence="2">
    <location>
        <begin position="189"/>
        <end position="202"/>
    </location>
</feature>
<feature type="sequence conflict" description="In Ref. 3; BAE32484/BAE41516." evidence="6" ref="3">
    <original>S</original>
    <variation>F</variation>
    <location>
        <position position="43"/>
    </location>
</feature>
<feature type="sequence conflict" description="In Ref. 3; BAC31001." evidence="6" ref="3">
    <original>K</original>
    <variation>E</variation>
    <location>
        <position position="68"/>
    </location>
</feature>
<organism>
    <name type="scientific">Mus musculus</name>
    <name type="common">Mouse</name>
    <dbReference type="NCBI Taxonomy" id="10090"/>
    <lineage>
        <taxon>Eukaryota</taxon>
        <taxon>Metazoa</taxon>
        <taxon>Chordata</taxon>
        <taxon>Craniata</taxon>
        <taxon>Vertebrata</taxon>
        <taxon>Euteleostomi</taxon>
        <taxon>Mammalia</taxon>
        <taxon>Eutheria</taxon>
        <taxon>Euarchontoglires</taxon>
        <taxon>Glires</taxon>
        <taxon>Rodentia</taxon>
        <taxon>Myomorpha</taxon>
        <taxon>Muroidea</taxon>
        <taxon>Muridae</taxon>
        <taxon>Murinae</taxon>
        <taxon>Mus</taxon>
        <taxon>Mus</taxon>
    </lineage>
</organism>